<sequence>MRGMGNMQGMMKQMQKMQKEMAKAQADLEAQEFTGTAGGGMVTVKATGKRVITDVVINEEVVDPEDIEMLQDLVLAATNDVLKQIEDTTSQTMGKFTQGLNIPGM</sequence>
<reference key="1">
    <citation type="journal article" date="2012" name="BMC Genomics">
        <title>Comparative genomics and transcriptomics of lineages I, II, and III strains of Listeria monocytogenes.</title>
        <authorList>
            <person name="Hain T."/>
            <person name="Ghai R."/>
            <person name="Billion A."/>
            <person name="Kuenne C.T."/>
            <person name="Steinweg C."/>
            <person name="Izar B."/>
            <person name="Mohamed W."/>
            <person name="Mraheil M."/>
            <person name="Domann E."/>
            <person name="Schaffrath S."/>
            <person name="Karst U."/>
            <person name="Goesmann A."/>
            <person name="Oehm S."/>
            <person name="Puhler A."/>
            <person name="Merkl R."/>
            <person name="Vorwerk S."/>
            <person name="Glaser P."/>
            <person name="Garrido P."/>
            <person name="Rusniok C."/>
            <person name="Buchrieser C."/>
            <person name="Goebel W."/>
            <person name="Chakraborty T."/>
        </authorList>
    </citation>
    <scope>NUCLEOTIDE SEQUENCE [LARGE SCALE GENOMIC DNA]</scope>
    <source>
        <strain>CLIP80459</strain>
    </source>
</reference>
<organism>
    <name type="scientific">Listeria monocytogenes serotype 4b (strain CLIP80459)</name>
    <dbReference type="NCBI Taxonomy" id="568819"/>
    <lineage>
        <taxon>Bacteria</taxon>
        <taxon>Bacillati</taxon>
        <taxon>Bacillota</taxon>
        <taxon>Bacilli</taxon>
        <taxon>Bacillales</taxon>
        <taxon>Listeriaceae</taxon>
        <taxon>Listeria</taxon>
    </lineage>
</organism>
<gene>
    <name type="ordered locus">Lm4b_02677</name>
</gene>
<proteinExistence type="inferred from homology"/>
<evidence type="ECO:0000255" key="1">
    <source>
        <dbReference type="HAMAP-Rule" id="MF_00274"/>
    </source>
</evidence>
<evidence type="ECO:0000256" key="2">
    <source>
        <dbReference type="SAM" id="MobiDB-lite"/>
    </source>
</evidence>
<name>Y2677_LISMC</name>
<comment type="function">
    <text evidence="1">Binds to DNA and alters its conformation. May be involved in regulation of gene expression, nucleoid organization and DNA protection.</text>
</comment>
<comment type="subunit">
    <text evidence="1">Homodimer.</text>
</comment>
<comment type="subcellular location">
    <subcellularLocation>
        <location evidence="1">Cytoplasm</location>
        <location evidence="1">Nucleoid</location>
    </subcellularLocation>
</comment>
<comment type="similarity">
    <text evidence="1">Belongs to the YbaB/EbfC family.</text>
</comment>
<keyword id="KW-0963">Cytoplasm</keyword>
<keyword id="KW-0238">DNA-binding</keyword>
<accession>C1KZQ8</accession>
<feature type="chain" id="PRO_1000204775" description="Nucleoid-associated protein Lm4b_02677">
    <location>
        <begin position="1"/>
        <end position="105"/>
    </location>
</feature>
<feature type="region of interest" description="Disordered" evidence="2">
    <location>
        <begin position="1"/>
        <end position="23"/>
    </location>
</feature>
<feature type="compositionally biased region" description="Low complexity" evidence="2">
    <location>
        <begin position="1"/>
        <end position="16"/>
    </location>
</feature>
<protein>
    <recommendedName>
        <fullName evidence="1">Nucleoid-associated protein Lm4b_02677</fullName>
    </recommendedName>
</protein>
<dbReference type="EMBL" id="FM242711">
    <property type="protein sequence ID" value="CAS06431.1"/>
    <property type="molecule type" value="Genomic_DNA"/>
</dbReference>
<dbReference type="RefSeq" id="WP_003722063.1">
    <property type="nucleotide sequence ID" value="NC_012488.1"/>
</dbReference>
<dbReference type="SMR" id="C1KZQ8"/>
<dbReference type="KEGG" id="lmc:Lm4b_02677"/>
<dbReference type="HOGENOM" id="CLU_140930_1_0_9"/>
<dbReference type="GO" id="GO:0043590">
    <property type="term" value="C:bacterial nucleoid"/>
    <property type="evidence" value="ECO:0007669"/>
    <property type="project" value="UniProtKB-UniRule"/>
</dbReference>
<dbReference type="GO" id="GO:0005829">
    <property type="term" value="C:cytosol"/>
    <property type="evidence" value="ECO:0007669"/>
    <property type="project" value="TreeGrafter"/>
</dbReference>
<dbReference type="GO" id="GO:0003677">
    <property type="term" value="F:DNA binding"/>
    <property type="evidence" value="ECO:0007669"/>
    <property type="project" value="UniProtKB-UniRule"/>
</dbReference>
<dbReference type="FunFam" id="3.30.1310.10:FF:000002">
    <property type="entry name" value="Nucleoid-associated protein IKC_06587"/>
    <property type="match status" value="1"/>
</dbReference>
<dbReference type="Gene3D" id="3.30.1310.10">
    <property type="entry name" value="Nucleoid-associated protein YbaB-like domain"/>
    <property type="match status" value="1"/>
</dbReference>
<dbReference type="HAMAP" id="MF_00274">
    <property type="entry name" value="DNA_YbaB_EbfC"/>
    <property type="match status" value="1"/>
</dbReference>
<dbReference type="InterPro" id="IPR036894">
    <property type="entry name" value="YbaB-like_sf"/>
</dbReference>
<dbReference type="InterPro" id="IPR004401">
    <property type="entry name" value="YbaB/EbfC"/>
</dbReference>
<dbReference type="NCBIfam" id="TIGR00103">
    <property type="entry name" value="DNA_YbaB_EbfC"/>
    <property type="match status" value="1"/>
</dbReference>
<dbReference type="PANTHER" id="PTHR33449">
    <property type="entry name" value="NUCLEOID-ASSOCIATED PROTEIN YBAB"/>
    <property type="match status" value="1"/>
</dbReference>
<dbReference type="PANTHER" id="PTHR33449:SF1">
    <property type="entry name" value="NUCLEOID-ASSOCIATED PROTEIN YBAB"/>
    <property type="match status" value="1"/>
</dbReference>
<dbReference type="Pfam" id="PF02575">
    <property type="entry name" value="YbaB_DNA_bd"/>
    <property type="match status" value="1"/>
</dbReference>
<dbReference type="PIRSF" id="PIRSF004555">
    <property type="entry name" value="UCP004555"/>
    <property type="match status" value="1"/>
</dbReference>
<dbReference type="SUPFAM" id="SSF82607">
    <property type="entry name" value="YbaB-like"/>
    <property type="match status" value="1"/>
</dbReference>